<protein>
    <recommendedName>
        <fullName evidence="1">Acyl carrier protein</fullName>
        <shortName evidence="1">ACP</shortName>
    </recommendedName>
</protein>
<sequence length="74" mass="8343">MAVFEKVQEIIVEELGKETEEVTLETTFDDLDADSLDVFQVISEIEDAFDIQIETEEGLNTVGDLVAYVEEKSK</sequence>
<feature type="chain" id="PRO_0000180204" description="Acyl carrier protein">
    <location>
        <begin position="1"/>
        <end position="74"/>
    </location>
</feature>
<feature type="domain" description="Carrier" evidence="2">
    <location>
        <begin position="1"/>
        <end position="73"/>
    </location>
</feature>
<feature type="modified residue" description="O-(pantetheine 4'-phosphoryl)serine" evidence="2">
    <location>
        <position position="35"/>
    </location>
</feature>
<reference key="1">
    <citation type="journal article" date="2002" name="Proc. Natl. Acad. Sci. U.S.A.">
        <title>Genome sequence and comparative microarray analysis of serotype M18 group A Streptococcus strains associated with acute rheumatic fever outbreaks.</title>
        <authorList>
            <person name="Smoot J.C."/>
            <person name="Barbian K.D."/>
            <person name="Van Gompel J.J."/>
            <person name="Smoot L.M."/>
            <person name="Chaussee M.S."/>
            <person name="Sylva G.L."/>
            <person name="Sturdevant D.E."/>
            <person name="Ricklefs S.M."/>
            <person name="Porcella S.F."/>
            <person name="Parkins L.D."/>
            <person name="Beres S.B."/>
            <person name="Campbell D.S."/>
            <person name="Smith T.M."/>
            <person name="Zhang Q."/>
            <person name="Kapur V."/>
            <person name="Daly J.A."/>
            <person name="Veasy L.G."/>
            <person name="Musser J.M."/>
        </authorList>
    </citation>
    <scope>NUCLEOTIDE SEQUENCE [LARGE SCALE GENOMIC DNA]</scope>
    <source>
        <strain>MGAS8232</strain>
    </source>
</reference>
<dbReference type="EMBL" id="AE009949">
    <property type="protein sequence ID" value="AAL98344.1"/>
    <property type="molecule type" value="Genomic_DNA"/>
</dbReference>
<dbReference type="RefSeq" id="WP_002983328.1">
    <property type="nucleotide sequence ID" value="NC_003485.1"/>
</dbReference>
<dbReference type="SMR" id="P63445"/>
<dbReference type="KEGG" id="spm:spyM18_1825"/>
<dbReference type="HOGENOM" id="CLU_108696_5_0_9"/>
<dbReference type="UniPathway" id="UPA00094"/>
<dbReference type="GO" id="GO:0005829">
    <property type="term" value="C:cytosol"/>
    <property type="evidence" value="ECO:0007669"/>
    <property type="project" value="TreeGrafter"/>
</dbReference>
<dbReference type="GO" id="GO:0016020">
    <property type="term" value="C:membrane"/>
    <property type="evidence" value="ECO:0007669"/>
    <property type="project" value="GOC"/>
</dbReference>
<dbReference type="GO" id="GO:0000035">
    <property type="term" value="F:acyl binding"/>
    <property type="evidence" value="ECO:0007669"/>
    <property type="project" value="TreeGrafter"/>
</dbReference>
<dbReference type="GO" id="GO:0000036">
    <property type="term" value="F:acyl carrier activity"/>
    <property type="evidence" value="ECO:0007669"/>
    <property type="project" value="UniProtKB-UniRule"/>
</dbReference>
<dbReference type="GO" id="GO:0009245">
    <property type="term" value="P:lipid A biosynthetic process"/>
    <property type="evidence" value="ECO:0007669"/>
    <property type="project" value="TreeGrafter"/>
</dbReference>
<dbReference type="Gene3D" id="1.10.1200.10">
    <property type="entry name" value="ACP-like"/>
    <property type="match status" value="1"/>
</dbReference>
<dbReference type="HAMAP" id="MF_01217">
    <property type="entry name" value="Acyl_carrier"/>
    <property type="match status" value="1"/>
</dbReference>
<dbReference type="InterPro" id="IPR003231">
    <property type="entry name" value="ACP"/>
</dbReference>
<dbReference type="InterPro" id="IPR036736">
    <property type="entry name" value="ACP-like_sf"/>
</dbReference>
<dbReference type="InterPro" id="IPR009081">
    <property type="entry name" value="PP-bd_ACP"/>
</dbReference>
<dbReference type="NCBIfam" id="NF002148">
    <property type="entry name" value="PRK00982.1-2"/>
    <property type="match status" value="1"/>
</dbReference>
<dbReference type="NCBIfam" id="NF002150">
    <property type="entry name" value="PRK00982.1-4"/>
    <property type="match status" value="1"/>
</dbReference>
<dbReference type="PANTHER" id="PTHR20863">
    <property type="entry name" value="ACYL CARRIER PROTEIN"/>
    <property type="match status" value="1"/>
</dbReference>
<dbReference type="PANTHER" id="PTHR20863:SF62">
    <property type="entry name" value="ACYL CARRIER PROTEIN"/>
    <property type="match status" value="1"/>
</dbReference>
<dbReference type="Pfam" id="PF00550">
    <property type="entry name" value="PP-binding"/>
    <property type="match status" value="1"/>
</dbReference>
<dbReference type="SUPFAM" id="SSF47336">
    <property type="entry name" value="ACP-like"/>
    <property type="match status" value="1"/>
</dbReference>
<dbReference type="PROSITE" id="PS50075">
    <property type="entry name" value="CARRIER"/>
    <property type="match status" value="1"/>
</dbReference>
<accession>P63445</accession>
<accession>Q99YD3</accession>
<gene>
    <name evidence="1" type="primary">acpP</name>
    <name type="synonym">acpP.2</name>
    <name type="ordered locus">spyM18_1825</name>
</gene>
<comment type="function">
    <text evidence="1">Carrier of the growing fatty acid chain in fatty acid biosynthesis.</text>
</comment>
<comment type="pathway">
    <text evidence="1">Lipid metabolism; fatty acid biosynthesis.</text>
</comment>
<comment type="subcellular location">
    <subcellularLocation>
        <location evidence="1">Cytoplasm</location>
    </subcellularLocation>
</comment>
<comment type="PTM">
    <text evidence="1">4'-phosphopantetheine is transferred from CoA to a specific serine of apo-ACP by AcpS. This modification is essential for activity because fatty acids are bound in thioester linkage to the sulfhydryl of the prosthetic group.</text>
</comment>
<comment type="similarity">
    <text evidence="1">Belongs to the acyl carrier protein (ACP) family.</text>
</comment>
<evidence type="ECO:0000255" key="1">
    <source>
        <dbReference type="HAMAP-Rule" id="MF_01217"/>
    </source>
</evidence>
<evidence type="ECO:0000255" key="2">
    <source>
        <dbReference type="PROSITE-ProRule" id="PRU00258"/>
    </source>
</evidence>
<organism>
    <name type="scientific">Streptococcus pyogenes serotype M18 (strain MGAS8232)</name>
    <dbReference type="NCBI Taxonomy" id="186103"/>
    <lineage>
        <taxon>Bacteria</taxon>
        <taxon>Bacillati</taxon>
        <taxon>Bacillota</taxon>
        <taxon>Bacilli</taxon>
        <taxon>Lactobacillales</taxon>
        <taxon>Streptococcaceae</taxon>
        <taxon>Streptococcus</taxon>
    </lineage>
</organism>
<proteinExistence type="inferred from homology"/>
<name>ACP_STRP8</name>
<keyword id="KW-0963">Cytoplasm</keyword>
<keyword id="KW-0275">Fatty acid biosynthesis</keyword>
<keyword id="KW-0276">Fatty acid metabolism</keyword>
<keyword id="KW-0444">Lipid biosynthesis</keyword>
<keyword id="KW-0443">Lipid metabolism</keyword>
<keyword id="KW-0596">Phosphopantetheine</keyword>
<keyword id="KW-0597">Phosphoprotein</keyword>